<feature type="chain" id="PRO_0000070005" description="P2Y purinoceptor 1">
    <location>
        <begin position="1"/>
        <end position="373"/>
    </location>
</feature>
<feature type="topological domain" description="Extracellular" evidence="5">
    <location>
        <begin position="1"/>
        <end position="51"/>
    </location>
</feature>
<feature type="transmembrane region" description="Helical; Name=1" evidence="1">
    <location>
        <begin position="52"/>
        <end position="74"/>
    </location>
</feature>
<feature type="topological domain" description="Cytoplasmic" evidence="5">
    <location>
        <begin position="75"/>
        <end position="87"/>
    </location>
</feature>
<feature type="transmembrane region" description="Helical; Name=2" evidence="1">
    <location>
        <begin position="88"/>
        <end position="109"/>
    </location>
</feature>
<feature type="topological domain" description="Extracellular" evidence="5">
    <location>
        <begin position="110"/>
        <end position="125"/>
    </location>
</feature>
<feature type="transmembrane region" description="Helical; Name=3" evidence="1">
    <location>
        <begin position="126"/>
        <end position="147"/>
    </location>
</feature>
<feature type="topological domain" description="Cytoplasmic" evidence="5">
    <location>
        <begin position="148"/>
        <end position="166"/>
    </location>
</feature>
<feature type="transmembrane region" description="Helical; Name=4" evidence="1">
    <location>
        <begin position="167"/>
        <end position="188"/>
    </location>
</feature>
<feature type="topological domain" description="Extracellular" evidence="5">
    <location>
        <begin position="189"/>
        <end position="214"/>
    </location>
</feature>
<feature type="transmembrane region" description="Helical; Name=5" evidence="1">
    <location>
        <begin position="215"/>
        <end position="237"/>
    </location>
</feature>
<feature type="topological domain" description="Cytoplasmic" evidence="5">
    <location>
        <begin position="238"/>
        <end position="260"/>
    </location>
</feature>
<feature type="transmembrane region" description="Helical; Name=6" evidence="1">
    <location>
        <begin position="261"/>
        <end position="284"/>
    </location>
</feature>
<feature type="topological domain" description="Extracellular" evidence="5">
    <location>
        <begin position="285"/>
        <end position="303"/>
    </location>
</feature>
<feature type="transmembrane region" description="Helical; Name=7" evidence="1">
    <location>
        <begin position="304"/>
        <end position="325"/>
    </location>
</feature>
<feature type="topological domain" description="Cytoplasmic" evidence="5">
    <location>
        <begin position="326"/>
        <end position="373"/>
    </location>
</feature>
<feature type="binding site" evidence="1">
    <location>
        <position position="46"/>
    </location>
    <ligand>
        <name>ADP</name>
        <dbReference type="ChEBI" id="CHEBI:456216"/>
    </ligand>
</feature>
<feature type="binding site" evidence="1">
    <location>
        <begin position="203"/>
        <end position="205"/>
    </location>
    <ligand>
        <name>ADP</name>
        <dbReference type="ChEBI" id="CHEBI:456216"/>
    </ligand>
</feature>
<feature type="binding site" evidence="1">
    <location>
        <begin position="283"/>
        <end position="287"/>
    </location>
    <ligand>
        <name>ADP</name>
        <dbReference type="ChEBI" id="CHEBI:456216"/>
    </ligand>
</feature>
<feature type="binding site" evidence="1">
    <location>
        <begin position="303"/>
        <end position="306"/>
    </location>
    <ligand>
        <name>ADP</name>
        <dbReference type="ChEBI" id="CHEBI:456216"/>
    </ligand>
</feature>
<feature type="binding site" evidence="1">
    <location>
        <position position="310"/>
    </location>
    <ligand>
        <name>ADP</name>
        <dbReference type="ChEBI" id="CHEBI:456216"/>
    </ligand>
</feature>
<feature type="glycosylation site" description="N-linked (GlcNAc...) asparagine" evidence="3">
    <location>
        <position position="11"/>
    </location>
</feature>
<feature type="glycosylation site" description="N-linked (GlcNAc...) asparagine" evidence="3">
    <location>
        <position position="27"/>
    </location>
</feature>
<feature type="glycosylation site" description="N-linked (GlcNAc...) asparagine" evidence="3">
    <location>
        <position position="113"/>
    </location>
</feature>
<feature type="glycosylation site" description="N-linked (GlcNAc...) asparagine" evidence="3">
    <location>
        <position position="197"/>
    </location>
</feature>
<feature type="disulfide bond" evidence="1">
    <location>
        <begin position="42"/>
        <end position="296"/>
    </location>
</feature>
<feature type="disulfide bond" evidence="4">
    <location>
        <begin position="124"/>
        <end position="202"/>
    </location>
</feature>
<organism>
    <name type="scientific">Cavia porcellus</name>
    <name type="common">Guinea pig</name>
    <dbReference type="NCBI Taxonomy" id="10141"/>
    <lineage>
        <taxon>Eukaryota</taxon>
        <taxon>Metazoa</taxon>
        <taxon>Chordata</taxon>
        <taxon>Craniata</taxon>
        <taxon>Vertebrata</taxon>
        <taxon>Euteleostomi</taxon>
        <taxon>Mammalia</taxon>
        <taxon>Eutheria</taxon>
        <taxon>Euarchontoglires</taxon>
        <taxon>Glires</taxon>
        <taxon>Rodentia</taxon>
        <taxon>Hystricomorpha</taxon>
        <taxon>Caviidae</taxon>
        <taxon>Cavia</taxon>
    </lineage>
</organism>
<accession>P59902</accession>
<comment type="function">
    <text evidence="2">Receptor for extracellular adenine nucleotides such as ADP. In platelets, binding to ADP leads to mobilization of intracellular calcium ions via activation of phospholipase C, a change in platelet shape, and ultimately platelet aggregation.</text>
</comment>
<comment type="subcellular location">
    <subcellularLocation>
        <location evidence="1">Cell membrane</location>
        <topology evidence="1">Multi-pass membrane protein</topology>
    </subcellularLocation>
</comment>
<comment type="similarity">
    <text evidence="4">Belongs to the G-protein coupled receptor 1 family.</text>
</comment>
<gene>
    <name type="primary">P2RY1</name>
</gene>
<reference key="1">
    <citation type="submission" date="2001-07" db="EMBL/GenBank/DDBJ databases">
        <title>A novel P2Y1 receptor in the guinea pig submucous plexus.</title>
        <authorList>
            <person name="Gao N."/>
            <person name="Hu H."/>
            <person name="Zhu M.X."/>
            <person name="Wood J.D."/>
        </authorList>
    </citation>
    <scope>NUCLEOTIDE SEQUENCE [MRNA]</scope>
    <source>
        <strain>Hartley</strain>
        <tissue>Small intestine</tissue>
    </source>
</reference>
<dbReference type="EMBL" id="AY048684">
    <property type="protein sequence ID" value="AAL05953.1"/>
    <property type="molecule type" value="mRNA"/>
</dbReference>
<dbReference type="RefSeq" id="NP_001166465.1">
    <property type="nucleotide sequence ID" value="NM_001172994.1"/>
</dbReference>
<dbReference type="RefSeq" id="XP_005006594.1">
    <property type="nucleotide sequence ID" value="XM_005006537.2"/>
</dbReference>
<dbReference type="SMR" id="P59902"/>
<dbReference type="FunCoup" id="P59902">
    <property type="interactions" value="761"/>
</dbReference>
<dbReference type="STRING" id="10141.ENSCPOP00000014399"/>
<dbReference type="GlyCosmos" id="P59902">
    <property type="glycosylation" value="4 sites, No reported glycans"/>
</dbReference>
<dbReference type="Ensembl" id="ENSCPOT00000015697.3">
    <property type="protein sequence ID" value="ENSCPOP00000014399.1"/>
    <property type="gene ID" value="ENSCPOG00000015545.4"/>
</dbReference>
<dbReference type="GeneID" id="100135592"/>
<dbReference type="KEGG" id="cpoc:100135592"/>
<dbReference type="CTD" id="5028"/>
<dbReference type="VEuPathDB" id="HostDB:ENSCPOG00000015545"/>
<dbReference type="eggNOG" id="ENOG502QWPV">
    <property type="taxonomic scope" value="Eukaryota"/>
</dbReference>
<dbReference type="GeneTree" id="ENSGT01030000234621"/>
<dbReference type="HOGENOM" id="CLU_009579_8_2_1"/>
<dbReference type="InParanoid" id="P59902"/>
<dbReference type="OMA" id="GFCVPFI"/>
<dbReference type="OrthoDB" id="8190652at2759"/>
<dbReference type="TreeFam" id="TF350009"/>
<dbReference type="Proteomes" id="UP000005447">
    <property type="component" value="Unassembled WGS sequence"/>
</dbReference>
<dbReference type="Bgee" id="ENSCPOG00000015545">
    <property type="expression patterns" value="Expressed in heart and 12 other cell types or tissues"/>
</dbReference>
<dbReference type="GO" id="GO:0005929">
    <property type="term" value="C:cilium"/>
    <property type="evidence" value="ECO:0007669"/>
    <property type="project" value="Ensembl"/>
</dbReference>
<dbReference type="GO" id="GO:0005886">
    <property type="term" value="C:plasma membrane"/>
    <property type="evidence" value="ECO:0000250"/>
    <property type="project" value="UniProtKB"/>
</dbReference>
<dbReference type="GO" id="GO:0031686">
    <property type="term" value="F:A1 adenosine receptor binding"/>
    <property type="evidence" value="ECO:0007669"/>
    <property type="project" value="TreeGrafter"/>
</dbReference>
<dbReference type="GO" id="GO:0005524">
    <property type="term" value="F:ATP binding"/>
    <property type="evidence" value="ECO:0000250"/>
    <property type="project" value="UniProtKB"/>
</dbReference>
<dbReference type="GO" id="GO:0001621">
    <property type="term" value="F:G protein-coupled ADP receptor activity"/>
    <property type="evidence" value="ECO:0000250"/>
    <property type="project" value="UniProtKB"/>
</dbReference>
<dbReference type="GO" id="GO:0045031">
    <property type="term" value="F:G protein-coupled ATP receptor activity"/>
    <property type="evidence" value="ECO:0000315"/>
    <property type="project" value="BHF-UCL"/>
</dbReference>
<dbReference type="GO" id="GO:0030594">
    <property type="term" value="F:neurotransmitter receptor activity"/>
    <property type="evidence" value="ECO:0000315"/>
    <property type="project" value="BHF-UCL"/>
</dbReference>
<dbReference type="GO" id="GO:0071318">
    <property type="term" value="P:cellular response to ATP"/>
    <property type="evidence" value="ECO:0000315"/>
    <property type="project" value="BHF-UCL"/>
</dbReference>
<dbReference type="GO" id="GO:0071415">
    <property type="term" value="P:cellular response to purine-containing compound"/>
    <property type="evidence" value="ECO:0000250"/>
    <property type="project" value="UniProtKB"/>
</dbReference>
<dbReference type="GO" id="GO:0051649">
    <property type="term" value="P:establishment of localization in cell"/>
    <property type="evidence" value="ECO:0007669"/>
    <property type="project" value="Ensembl"/>
</dbReference>
<dbReference type="GO" id="GO:0006811">
    <property type="term" value="P:monoatomic ion transport"/>
    <property type="evidence" value="ECO:0007669"/>
    <property type="project" value="Ensembl"/>
</dbReference>
<dbReference type="GO" id="GO:0023041">
    <property type="term" value="P:neuronal signal transduction"/>
    <property type="evidence" value="ECO:0000315"/>
    <property type="project" value="BHF-UCL"/>
</dbReference>
<dbReference type="GO" id="GO:0007200">
    <property type="term" value="P:phospholipase C-activating G protein-coupled receptor signaling pathway"/>
    <property type="evidence" value="ECO:0000250"/>
    <property type="project" value="UniProtKB"/>
</dbReference>
<dbReference type="GO" id="GO:0030168">
    <property type="term" value="P:platelet activation"/>
    <property type="evidence" value="ECO:0007669"/>
    <property type="project" value="InterPro"/>
</dbReference>
<dbReference type="GO" id="GO:0043270">
    <property type="term" value="P:positive regulation of monoatomic ion transport"/>
    <property type="evidence" value="ECO:0007669"/>
    <property type="project" value="Ensembl"/>
</dbReference>
<dbReference type="GO" id="GO:0008360">
    <property type="term" value="P:regulation of cell shape"/>
    <property type="evidence" value="ECO:0000250"/>
    <property type="project" value="UniProtKB"/>
</dbReference>
<dbReference type="GO" id="GO:0090075">
    <property type="term" value="P:relaxation of muscle"/>
    <property type="evidence" value="ECO:0000315"/>
    <property type="project" value="BHF-UCL"/>
</dbReference>
<dbReference type="CDD" id="cd15377">
    <property type="entry name" value="7tmA_P2Y1"/>
    <property type="match status" value="1"/>
</dbReference>
<dbReference type="FunFam" id="1.20.1070.10:FF:000017">
    <property type="entry name" value="lysophosphatidic acid receptor 4"/>
    <property type="match status" value="1"/>
</dbReference>
<dbReference type="Gene3D" id="1.20.1070.10">
    <property type="entry name" value="Rhodopsin 7-helix transmembrane proteins"/>
    <property type="match status" value="1"/>
</dbReference>
<dbReference type="InterPro" id="IPR000276">
    <property type="entry name" value="GPCR_Rhodpsn"/>
</dbReference>
<dbReference type="InterPro" id="IPR017452">
    <property type="entry name" value="GPCR_Rhodpsn_7TM"/>
</dbReference>
<dbReference type="InterPro" id="IPR000142">
    <property type="entry name" value="P2Y1_rcpt"/>
</dbReference>
<dbReference type="PANTHER" id="PTHR24231:SF2">
    <property type="entry name" value="P2Y PURINOCEPTOR 1"/>
    <property type="match status" value="1"/>
</dbReference>
<dbReference type="PANTHER" id="PTHR24231">
    <property type="entry name" value="PURINOCEPTOR-RELATED G-PROTEIN COUPLED RECEPTOR"/>
    <property type="match status" value="1"/>
</dbReference>
<dbReference type="Pfam" id="PF00001">
    <property type="entry name" value="7tm_1"/>
    <property type="match status" value="1"/>
</dbReference>
<dbReference type="PRINTS" id="PR00237">
    <property type="entry name" value="GPCRRHODOPSN"/>
</dbReference>
<dbReference type="PRINTS" id="PR00595">
    <property type="entry name" value="P2Y1PRNOCPTR"/>
</dbReference>
<dbReference type="PRINTS" id="PR01157">
    <property type="entry name" value="P2YPURNOCPTR"/>
</dbReference>
<dbReference type="SUPFAM" id="SSF81321">
    <property type="entry name" value="Family A G protein-coupled receptor-like"/>
    <property type="match status" value="1"/>
</dbReference>
<dbReference type="PROSITE" id="PS00237">
    <property type="entry name" value="G_PROTEIN_RECEP_F1_1"/>
    <property type="match status" value="1"/>
</dbReference>
<dbReference type="PROSITE" id="PS50262">
    <property type="entry name" value="G_PROTEIN_RECEP_F1_2"/>
    <property type="match status" value="1"/>
</dbReference>
<name>P2RY1_CAVPO</name>
<proteinExistence type="evidence at transcript level"/>
<keyword id="KW-0067">ATP-binding</keyword>
<keyword id="KW-1003">Cell membrane</keyword>
<keyword id="KW-1015">Disulfide bond</keyword>
<keyword id="KW-0297">G-protein coupled receptor</keyword>
<keyword id="KW-0325">Glycoprotein</keyword>
<keyword id="KW-0472">Membrane</keyword>
<keyword id="KW-0547">Nucleotide-binding</keyword>
<keyword id="KW-0675">Receptor</keyword>
<keyword id="KW-1185">Reference proteome</keyword>
<keyword id="KW-0807">Transducer</keyword>
<keyword id="KW-0812">Transmembrane</keyword>
<keyword id="KW-1133">Transmembrane helix</keyword>
<protein>
    <recommendedName>
        <fullName>P2Y purinoceptor 1</fullName>
        <shortName>P2Y1</shortName>
    </recommendedName>
    <alternativeName>
        <fullName>ATP receptor</fullName>
    </alternativeName>
    <alternativeName>
        <fullName>Purinergic receptor</fullName>
    </alternativeName>
</protein>
<sequence length="373" mass="42301">MTEVLWPAAPNGTDAAFLASPGFHWGNSTATSTAAAAAPFRCALTKTGFQFYYLPAVYIVVFIIGFLGNSIAIWMFVFHMKPWSGISVYMFNLALADFLYVLTLPALIFYYFNKTNWIFGDAMCKLQRFIFHVNLYGSILFLTCISAHRYSGVVYPLKSLGRLKKKNAVYISVLVWLIVVVAISPILFYSGTGIRKNKTITCYDTTSDEYLRSYFIYSMCTTVAMFCVPLVLILGCYGLIVRALIYKDLDNSPLRRKSIYLVIIVLTVFAVSYIPFHVMKTMNLRARLDFQTPEMCTFNDRVYATYQVTRGLASLNSCVDPILYFLAGDTFRRRLSRATRKASRRSEANLQSKSEDMTLNILSEFKQNGDTSL</sequence>
<evidence type="ECO:0000250" key="1">
    <source>
        <dbReference type="UniProtKB" id="P47900"/>
    </source>
</evidence>
<evidence type="ECO:0000250" key="2">
    <source>
        <dbReference type="UniProtKB" id="P49650"/>
    </source>
</evidence>
<evidence type="ECO:0000255" key="3"/>
<evidence type="ECO:0000255" key="4">
    <source>
        <dbReference type="PROSITE-ProRule" id="PRU00521"/>
    </source>
</evidence>
<evidence type="ECO:0000305" key="5"/>